<proteinExistence type="inferred from homology"/>
<protein>
    <recommendedName>
        <fullName evidence="1">Formate-dependent phosphoribosylglycinamide formyltransferase</fullName>
        <ecNumber evidence="1">6.3.1.21</ecNumber>
    </recommendedName>
    <alternativeName>
        <fullName evidence="1">5'-phosphoribosylglycinamide transformylase 2</fullName>
    </alternativeName>
    <alternativeName>
        <fullName evidence="1">Formate-dependent GAR transformylase</fullName>
    </alternativeName>
    <alternativeName>
        <fullName evidence="1">GAR transformylase 2</fullName>
        <shortName evidence="1">GART 2</shortName>
    </alternativeName>
    <alternativeName>
        <fullName evidence="1">Non-folate glycinamide ribonucleotide transformylase</fullName>
    </alternativeName>
    <alternativeName>
        <fullName evidence="1">Phosphoribosylglycinamide formyltransferase 2</fullName>
    </alternativeName>
</protein>
<dbReference type="EC" id="6.3.1.21" evidence="1"/>
<dbReference type="EMBL" id="AP009256">
    <property type="protein sequence ID" value="BAF39306.1"/>
    <property type="status" value="ALT_INIT"/>
    <property type="molecule type" value="Genomic_DNA"/>
</dbReference>
<dbReference type="RefSeq" id="WP_011742973.1">
    <property type="nucleotide sequence ID" value="NZ_CAXVKE010000001.1"/>
</dbReference>
<dbReference type="SMR" id="A1A0S3"/>
<dbReference type="STRING" id="367928.BAD_0525"/>
<dbReference type="PaxDb" id="1680-BADO_0538"/>
<dbReference type="GeneID" id="4556603"/>
<dbReference type="KEGG" id="bad:BAD_0525"/>
<dbReference type="HOGENOM" id="CLU_011534_1_3_11"/>
<dbReference type="UniPathway" id="UPA00074">
    <property type="reaction ID" value="UER00127"/>
</dbReference>
<dbReference type="Proteomes" id="UP000008702">
    <property type="component" value="Chromosome"/>
</dbReference>
<dbReference type="GO" id="GO:0005829">
    <property type="term" value="C:cytosol"/>
    <property type="evidence" value="ECO:0007669"/>
    <property type="project" value="TreeGrafter"/>
</dbReference>
<dbReference type="GO" id="GO:0005524">
    <property type="term" value="F:ATP binding"/>
    <property type="evidence" value="ECO:0007669"/>
    <property type="project" value="UniProtKB-UniRule"/>
</dbReference>
<dbReference type="GO" id="GO:0000287">
    <property type="term" value="F:magnesium ion binding"/>
    <property type="evidence" value="ECO:0007669"/>
    <property type="project" value="InterPro"/>
</dbReference>
<dbReference type="GO" id="GO:0043815">
    <property type="term" value="F:phosphoribosylglycinamide formyltransferase 2 activity"/>
    <property type="evidence" value="ECO:0007669"/>
    <property type="project" value="UniProtKB-UniRule"/>
</dbReference>
<dbReference type="GO" id="GO:0004644">
    <property type="term" value="F:phosphoribosylglycinamide formyltransferase activity"/>
    <property type="evidence" value="ECO:0007669"/>
    <property type="project" value="InterPro"/>
</dbReference>
<dbReference type="GO" id="GO:0006189">
    <property type="term" value="P:'de novo' IMP biosynthetic process"/>
    <property type="evidence" value="ECO:0007669"/>
    <property type="project" value="UniProtKB-UniRule"/>
</dbReference>
<dbReference type="Gene3D" id="3.40.50.20">
    <property type="match status" value="1"/>
</dbReference>
<dbReference type="Gene3D" id="3.30.1490.20">
    <property type="entry name" value="ATP-grasp fold, A domain"/>
    <property type="match status" value="1"/>
</dbReference>
<dbReference type="Gene3D" id="3.30.470.20">
    <property type="entry name" value="ATP-grasp fold, B domain"/>
    <property type="match status" value="1"/>
</dbReference>
<dbReference type="HAMAP" id="MF_01643">
    <property type="entry name" value="PurT"/>
    <property type="match status" value="1"/>
</dbReference>
<dbReference type="InterPro" id="IPR011761">
    <property type="entry name" value="ATP-grasp"/>
</dbReference>
<dbReference type="InterPro" id="IPR003135">
    <property type="entry name" value="ATP-grasp_carboxylate-amine"/>
</dbReference>
<dbReference type="InterPro" id="IPR013815">
    <property type="entry name" value="ATP_grasp_subdomain_1"/>
</dbReference>
<dbReference type="InterPro" id="IPR016185">
    <property type="entry name" value="PreATP-grasp_dom_sf"/>
</dbReference>
<dbReference type="InterPro" id="IPR005862">
    <property type="entry name" value="PurT"/>
</dbReference>
<dbReference type="InterPro" id="IPR054350">
    <property type="entry name" value="PurT/PurK_preATP-grasp"/>
</dbReference>
<dbReference type="InterPro" id="IPR048740">
    <property type="entry name" value="PurT_C"/>
</dbReference>
<dbReference type="InterPro" id="IPR011054">
    <property type="entry name" value="Rudment_hybrid_motif"/>
</dbReference>
<dbReference type="NCBIfam" id="NF006766">
    <property type="entry name" value="PRK09288.1"/>
    <property type="match status" value="1"/>
</dbReference>
<dbReference type="PANTHER" id="PTHR43055">
    <property type="entry name" value="FORMATE-DEPENDENT PHOSPHORIBOSYLGLYCINAMIDE FORMYLTRANSFERASE"/>
    <property type="match status" value="1"/>
</dbReference>
<dbReference type="PANTHER" id="PTHR43055:SF1">
    <property type="entry name" value="FORMATE-DEPENDENT PHOSPHORIBOSYLGLYCINAMIDE FORMYLTRANSFERASE"/>
    <property type="match status" value="1"/>
</dbReference>
<dbReference type="Pfam" id="PF02222">
    <property type="entry name" value="ATP-grasp"/>
    <property type="match status" value="1"/>
</dbReference>
<dbReference type="Pfam" id="PF21244">
    <property type="entry name" value="PurT_C"/>
    <property type="match status" value="1"/>
</dbReference>
<dbReference type="Pfam" id="PF22660">
    <property type="entry name" value="RS_preATP-grasp-like"/>
    <property type="match status" value="1"/>
</dbReference>
<dbReference type="SUPFAM" id="SSF56059">
    <property type="entry name" value="Glutathione synthetase ATP-binding domain-like"/>
    <property type="match status" value="1"/>
</dbReference>
<dbReference type="SUPFAM" id="SSF52440">
    <property type="entry name" value="PreATP-grasp domain"/>
    <property type="match status" value="1"/>
</dbReference>
<dbReference type="SUPFAM" id="SSF51246">
    <property type="entry name" value="Rudiment single hybrid motif"/>
    <property type="match status" value="1"/>
</dbReference>
<dbReference type="PROSITE" id="PS50975">
    <property type="entry name" value="ATP_GRASP"/>
    <property type="match status" value="1"/>
</dbReference>
<gene>
    <name evidence="1" type="primary">purT</name>
    <name type="ordered locus">BAD_0525</name>
</gene>
<name>PURT_BIFAA</name>
<reference key="1">
    <citation type="submission" date="2006-12" db="EMBL/GenBank/DDBJ databases">
        <title>Bifidobacterium adolescentis complete genome sequence.</title>
        <authorList>
            <person name="Suzuki T."/>
            <person name="Tsuda Y."/>
            <person name="Kanou N."/>
            <person name="Inoue T."/>
            <person name="Kumazaki K."/>
            <person name="Nagano S."/>
            <person name="Hirai S."/>
            <person name="Tanaka K."/>
            <person name="Watanabe K."/>
        </authorList>
    </citation>
    <scope>NUCLEOTIDE SEQUENCE [LARGE SCALE GENOMIC DNA]</scope>
    <source>
        <strain>ATCC 15703 / DSM 20083 / NCTC 11814 / E194a</strain>
    </source>
</reference>
<organism>
    <name type="scientific">Bifidobacterium adolescentis (strain ATCC 15703 / DSM 20083 / NCTC 11814 / E194a)</name>
    <dbReference type="NCBI Taxonomy" id="367928"/>
    <lineage>
        <taxon>Bacteria</taxon>
        <taxon>Bacillati</taxon>
        <taxon>Actinomycetota</taxon>
        <taxon>Actinomycetes</taxon>
        <taxon>Bifidobacteriales</taxon>
        <taxon>Bifidobacteriaceae</taxon>
        <taxon>Bifidobacterium</taxon>
    </lineage>
</organism>
<comment type="function">
    <text evidence="1">Involved in the de novo purine biosynthesis. Catalyzes the transfer of formate to 5-phospho-ribosyl-glycinamide (GAR), producing 5-phospho-ribosyl-N-formylglycinamide (FGAR). Formate is provided by PurU via hydrolysis of 10-formyl-tetrahydrofolate.</text>
</comment>
<comment type="catalytic activity">
    <reaction evidence="1">
        <text>N(1)-(5-phospho-beta-D-ribosyl)glycinamide + formate + ATP = N(2)-formyl-N(1)-(5-phospho-beta-D-ribosyl)glycinamide + ADP + phosphate + H(+)</text>
        <dbReference type="Rhea" id="RHEA:24829"/>
        <dbReference type="ChEBI" id="CHEBI:15378"/>
        <dbReference type="ChEBI" id="CHEBI:15740"/>
        <dbReference type="ChEBI" id="CHEBI:30616"/>
        <dbReference type="ChEBI" id="CHEBI:43474"/>
        <dbReference type="ChEBI" id="CHEBI:143788"/>
        <dbReference type="ChEBI" id="CHEBI:147286"/>
        <dbReference type="ChEBI" id="CHEBI:456216"/>
        <dbReference type="EC" id="6.3.1.21"/>
    </reaction>
    <physiologicalReaction direction="left-to-right" evidence="1">
        <dbReference type="Rhea" id="RHEA:24830"/>
    </physiologicalReaction>
</comment>
<comment type="pathway">
    <text evidence="1">Purine metabolism; IMP biosynthesis via de novo pathway; N(2)-formyl-N(1)-(5-phospho-D-ribosyl)glycinamide from N(1)-(5-phospho-D-ribosyl)glycinamide (formate route): step 1/1.</text>
</comment>
<comment type="subunit">
    <text evidence="1">Homodimer.</text>
</comment>
<comment type="similarity">
    <text evidence="1">Belongs to the PurK/PurT family.</text>
</comment>
<comment type="sequence caution" evidence="2">
    <conflict type="erroneous initiation">
        <sequence resource="EMBL-CDS" id="BAF39306"/>
    </conflict>
</comment>
<keyword id="KW-0067">ATP-binding</keyword>
<keyword id="KW-0436">Ligase</keyword>
<keyword id="KW-0460">Magnesium</keyword>
<keyword id="KW-0479">Metal-binding</keyword>
<keyword id="KW-0547">Nucleotide-binding</keyword>
<keyword id="KW-0658">Purine biosynthesis</keyword>
<keyword id="KW-1185">Reference proteome</keyword>
<evidence type="ECO:0000255" key="1">
    <source>
        <dbReference type="HAMAP-Rule" id="MF_01643"/>
    </source>
</evidence>
<evidence type="ECO:0000305" key="2"/>
<accession>A1A0S3</accession>
<sequence length="399" mass="42265">MLFLGSGELGKEVTIELMRLGAWVCAADSYAGAPAQQVAHEYRVLDMANADQLRALFDEIQPDIIVPEVEAIATSELAAAAARGAQVVPSAEIAAICMDRERLRVLAHEELGLPTTPYRFAGSLEELREGAQIVGYPCVVKPIMSSSGHGQSVVRSADAIDAAWTEAQEGRRAHDEGDVSRVIVEALAPLDYELTVLTVSSSAGIVTCAPIGQRQESGDYRESWQPATFTPDVLEQAQHIARTAVEGLVAKAQASGEKGWGVFGVELFVLTDGNVLFNEVSPRPHDTGMVTMASQRLSEFALHARAILGLPITQEHVALSIPEGTVAASHAIVVQGDGEAEFRNVAAALAEPGTDLRVFAKPEVHGHRRMAVALAVGGDEADARAKAGNVAESLDIAIV</sequence>
<feature type="chain" id="PRO_0000319128" description="Formate-dependent phosphoribosylglycinamide formyltransferase">
    <location>
        <begin position="1"/>
        <end position="399"/>
    </location>
</feature>
<feature type="domain" description="ATP-grasp" evidence="1">
    <location>
        <begin position="105"/>
        <end position="308"/>
    </location>
</feature>
<feature type="binding site" evidence="1">
    <location>
        <begin position="8"/>
        <end position="9"/>
    </location>
    <ligand>
        <name>N(1)-(5-phospho-beta-D-ribosyl)glycinamide</name>
        <dbReference type="ChEBI" id="CHEBI:143788"/>
    </ligand>
</feature>
<feature type="binding site" evidence="1">
    <location>
        <position position="68"/>
    </location>
    <ligand>
        <name>N(1)-(5-phospho-beta-D-ribosyl)glycinamide</name>
        <dbReference type="ChEBI" id="CHEBI:143788"/>
    </ligand>
</feature>
<feature type="binding site" evidence="1">
    <location>
        <position position="100"/>
    </location>
    <ligand>
        <name>ATP</name>
        <dbReference type="ChEBI" id="CHEBI:30616"/>
    </ligand>
</feature>
<feature type="binding site" evidence="1">
    <location>
        <position position="141"/>
    </location>
    <ligand>
        <name>ATP</name>
        <dbReference type="ChEBI" id="CHEBI:30616"/>
    </ligand>
</feature>
<feature type="binding site" evidence="1">
    <location>
        <begin position="146"/>
        <end position="151"/>
    </location>
    <ligand>
        <name>ATP</name>
        <dbReference type="ChEBI" id="CHEBI:30616"/>
    </ligand>
</feature>
<feature type="binding site" evidence="1">
    <location>
        <begin position="185"/>
        <end position="188"/>
    </location>
    <ligand>
        <name>ATP</name>
        <dbReference type="ChEBI" id="CHEBI:30616"/>
    </ligand>
</feature>
<feature type="binding site" evidence="1">
    <location>
        <position position="193"/>
    </location>
    <ligand>
        <name>ATP</name>
        <dbReference type="ChEBI" id="CHEBI:30616"/>
    </ligand>
</feature>
<feature type="binding site" evidence="1">
    <location>
        <position position="266"/>
    </location>
    <ligand>
        <name>Mg(2+)</name>
        <dbReference type="ChEBI" id="CHEBI:18420"/>
    </ligand>
</feature>
<feature type="binding site" evidence="1">
    <location>
        <position position="279"/>
    </location>
    <ligand>
        <name>Mg(2+)</name>
        <dbReference type="ChEBI" id="CHEBI:18420"/>
    </ligand>
</feature>
<feature type="binding site" evidence="1">
    <location>
        <position position="286"/>
    </location>
    <ligand>
        <name>N(1)-(5-phospho-beta-D-ribosyl)glycinamide</name>
        <dbReference type="ChEBI" id="CHEBI:143788"/>
    </ligand>
</feature>
<feature type="binding site" evidence="1">
    <location>
        <position position="361"/>
    </location>
    <ligand>
        <name>N(1)-(5-phospho-beta-D-ribosyl)glycinamide</name>
        <dbReference type="ChEBI" id="CHEBI:143788"/>
    </ligand>
</feature>
<feature type="binding site" evidence="1">
    <location>
        <begin position="368"/>
        <end position="369"/>
    </location>
    <ligand>
        <name>N(1)-(5-phospho-beta-D-ribosyl)glycinamide</name>
        <dbReference type="ChEBI" id="CHEBI:143788"/>
    </ligand>
</feature>